<protein>
    <recommendedName>
        <fullName evidence="1">Bifunctional glutamine synthetase adenylyltransferase/adenylyl-removing enzyme</fullName>
    </recommendedName>
    <alternativeName>
        <fullName evidence="1">ATP:glutamine synthetase adenylyltransferase</fullName>
    </alternativeName>
    <alternativeName>
        <fullName evidence="1">ATase</fullName>
    </alternativeName>
    <domain>
        <recommendedName>
            <fullName evidence="1">Glutamine synthetase adenylyl-L-tyrosine phosphorylase</fullName>
            <ecNumber evidence="1">2.7.7.89</ecNumber>
        </recommendedName>
        <alternativeName>
            <fullName evidence="1">Adenylyl removase</fullName>
            <shortName evidence="1">AR</shortName>
            <shortName evidence="1">AT-N</shortName>
        </alternativeName>
    </domain>
    <domain>
        <recommendedName>
            <fullName evidence="1">Glutamine synthetase adenylyl transferase</fullName>
            <ecNumber evidence="1">2.7.7.42</ecNumber>
        </recommendedName>
        <alternativeName>
            <fullName evidence="1">Adenylyl transferase</fullName>
            <shortName evidence="1">AT</shortName>
            <shortName evidence="1">AT-C</shortName>
        </alternativeName>
    </domain>
</protein>
<name>GLNE_NITEU</name>
<reference key="1">
    <citation type="journal article" date="2003" name="J. Bacteriol.">
        <title>Complete genome sequence of the ammonia-oxidizing bacterium and obligate chemolithoautotroph Nitrosomonas europaea.</title>
        <authorList>
            <person name="Chain P."/>
            <person name="Lamerdin J.E."/>
            <person name="Larimer F.W."/>
            <person name="Regala W."/>
            <person name="Lao V."/>
            <person name="Land M.L."/>
            <person name="Hauser L."/>
            <person name="Hooper A.B."/>
            <person name="Klotz M.G."/>
            <person name="Norton J."/>
            <person name="Sayavedra-Soto L.A."/>
            <person name="Arciero D.M."/>
            <person name="Hommes N.G."/>
            <person name="Whittaker M.M."/>
            <person name="Arp D.J."/>
        </authorList>
    </citation>
    <scope>NUCLEOTIDE SEQUENCE [LARGE SCALE GENOMIC DNA]</scope>
    <source>
        <strain>ATCC 19718 / CIP 103999 / KCTC 2705 / NBRC 14298</strain>
    </source>
</reference>
<organism>
    <name type="scientific">Nitrosomonas europaea (strain ATCC 19718 / CIP 103999 / KCTC 2705 / NBRC 14298)</name>
    <dbReference type="NCBI Taxonomy" id="228410"/>
    <lineage>
        <taxon>Bacteria</taxon>
        <taxon>Pseudomonadati</taxon>
        <taxon>Pseudomonadota</taxon>
        <taxon>Betaproteobacteria</taxon>
        <taxon>Nitrosomonadales</taxon>
        <taxon>Nitrosomonadaceae</taxon>
        <taxon>Nitrosomonas</taxon>
    </lineage>
</organism>
<dbReference type="EC" id="2.7.7.89" evidence="1"/>
<dbReference type="EC" id="2.7.7.42" evidence="1"/>
<dbReference type="EMBL" id="AL954747">
    <property type="protein sequence ID" value="CAD85240.1"/>
    <property type="molecule type" value="Genomic_DNA"/>
</dbReference>
<dbReference type="RefSeq" id="WP_011111907.1">
    <property type="nucleotide sequence ID" value="NC_004757.1"/>
</dbReference>
<dbReference type="SMR" id="Q81ZZ7"/>
<dbReference type="STRING" id="228410.NE1329"/>
<dbReference type="GeneID" id="87104505"/>
<dbReference type="KEGG" id="neu:NE1329"/>
<dbReference type="eggNOG" id="COG1391">
    <property type="taxonomic scope" value="Bacteria"/>
</dbReference>
<dbReference type="HOGENOM" id="CLU_006233_0_1_4"/>
<dbReference type="OrthoDB" id="9759366at2"/>
<dbReference type="PhylomeDB" id="Q81ZZ7"/>
<dbReference type="Proteomes" id="UP000001416">
    <property type="component" value="Chromosome"/>
</dbReference>
<dbReference type="GO" id="GO:0005829">
    <property type="term" value="C:cytosol"/>
    <property type="evidence" value="ECO:0007669"/>
    <property type="project" value="TreeGrafter"/>
</dbReference>
<dbReference type="GO" id="GO:0008882">
    <property type="term" value="F:[glutamate-ammonia-ligase] adenylyltransferase activity"/>
    <property type="evidence" value="ECO:0007669"/>
    <property type="project" value="UniProtKB-UniRule"/>
</dbReference>
<dbReference type="GO" id="GO:0047388">
    <property type="term" value="F:[glutamine synthetase]-adenylyl-L-tyrosine phosphorylase activity"/>
    <property type="evidence" value="ECO:0007669"/>
    <property type="project" value="UniProtKB-EC"/>
</dbReference>
<dbReference type="GO" id="GO:0005524">
    <property type="term" value="F:ATP binding"/>
    <property type="evidence" value="ECO:0007669"/>
    <property type="project" value="UniProtKB-UniRule"/>
</dbReference>
<dbReference type="GO" id="GO:0000287">
    <property type="term" value="F:magnesium ion binding"/>
    <property type="evidence" value="ECO:0007669"/>
    <property type="project" value="UniProtKB-UniRule"/>
</dbReference>
<dbReference type="GO" id="GO:0000820">
    <property type="term" value="P:regulation of glutamine family amino acid metabolic process"/>
    <property type="evidence" value="ECO:0007669"/>
    <property type="project" value="UniProtKB-UniRule"/>
</dbReference>
<dbReference type="CDD" id="cd05401">
    <property type="entry name" value="NT_GlnE_GlnD_like"/>
    <property type="match status" value="2"/>
</dbReference>
<dbReference type="FunFam" id="1.20.120.330:FF:000005">
    <property type="entry name" value="Bifunctional glutamine synthetase adenylyltransferase/adenylyl-removing enzyme"/>
    <property type="match status" value="1"/>
</dbReference>
<dbReference type="FunFam" id="3.30.460.10:FF:000009">
    <property type="entry name" value="Bifunctional glutamine synthetase adenylyltransferase/adenylyl-removing enzyme"/>
    <property type="match status" value="1"/>
</dbReference>
<dbReference type="Gene3D" id="1.20.120.1510">
    <property type="match status" value="1"/>
</dbReference>
<dbReference type="Gene3D" id="3.30.460.10">
    <property type="entry name" value="Beta Polymerase, domain 2"/>
    <property type="match status" value="2"/>
</dbReference>
<dbReference type="Gene3D" id="1.20.120.330">
    <property type="entry name" value="Nucleotidyltransferases domain 2"/>
    <property type="match status" value="2"/>
</dbReference>
<dbReference type="HAMAP" id="MF_00802">
    <property type="entry name" value="GlnE"/>
    <property type="match status" value="1"/>
</dbReference>
<dbReference type="InterPro" id="IPR023057">
    <property type="entry name" value="GlnE"/>
</dbReference>
<dbReference type="InterPro" id="IPR005190">
    <property type="entry name" value="GlnE_rpt_dom"/>
</dbReference>
<dbReference type="InterPro" id="IPR043519">
    <property type="entry name" value="NT_sf"/>
</dbReference>
<dbReference type="InterPro" id="IPR013546">
    <property type="entry name" value="PII_UdlTrfase/GS_AdlTrfase"/>
</dbReference>
<dbReference type="NCBIfam" id="NF008292">
    <property type="entry name" value="PRK11072.1"/>
    <property type="match status" value="1"/>
</dbReference>
<dbReference type="PANTHER" id="PTHR30621:SF0">
    <property type="entry name" value="BIFUNCTIONAL GLUTAMINE SYNTHETASE ADENYLYLTRANSFERASE_ADENYLYL-REMOVING ENZYME"/>
    <property type="match status" value="1"/>
</dbReference>
<dbReference type="PANTHER" id="PTHR30621">
    <property type="entry name" value="GLUTAMINE SYNTHETASE ADENYLYLTRANSFERASE"/>
    <property type="match status" value="1"/>
</dbReference>
<dbReference type="Pfam" id="PF08335">
    <property type="entry name" value="GlnD_UR_UTase"/>
    <property type="match status" value="2"/>
</dbReference>
<dbReference type="Pfam" id="PF03710">
    <property type="entry name" value="GlnE"/>
    <property type="match status" value="2"/>
</dbReference>
<dbReference type="SUPFAM" id="SSF81301">
    <property type="entry name" value="Nucleotidyltransferase"/>
    <property type="match status" value="2"/>
</dbReference>
<dbReference type="SUPFAM" id="SSF81593">
    <property type="entry name" value="Nucleotidyltransferase substrate binding subunit/domain"/>
    <property type="match status" value="2"/>
</dbReference>
<feature type="chain" id="PRO_0000209260" description="Bifunctional glutamine synthetase adenylyltransferase/adenylyl-removing enzyme">
    <location>
        <begin position="1"/>
        <end position="929"/>
    </location>
</feature>
<feature type="region of interest" description="Adenylyl removase" evidence="1">
    <location>
        <begin position="1"/>
        <end position="423"/>
    </location>
</feature>
<feature type="region of interest" description="Adenylyl transferase" evidence="1">
    <location>
        <begin position="433"/>
        <end position="929"/>
    </location>
</feature>
<comment type="function">
    <text evidence="1">Involved in the regulation of glutamine synthetase GlnA, a key enzyme in the process to assimilate ammonia. When cellular nitrogen levels are high, the C-terminal adenylyl transferase (AT) inactivates GlnA by covalent transfer of an adenylyl group from ATP to specific tyrosine residue of GlnA, thus reducing its activity. Conversely, when nitrogen levels are low, the N-terminal adenylyl removase (AR) activates GlnA by removing the adenylyl group by phosphorolysis, increasing its activity. The regulatory region of GlnE binds the signal transduction protein PII (GlnB) which indicates the nitrogen status of the cell.</text>
</comment>
<comment type="catalytic activity">
    <reaction evidence="1">
        <text>[glutamine synthetase]-O(4)-(5'-adenylyl)-L-tyrosine + phosphate = [glutamine synthetase]-L-tyrosine + ADP</text>
        <dbReference type="Rhea" id="RHEA:43716"/>
        <dbReference type="Rhea" id="RHEA-COMP:10660"/>
        <dbReference type="Rhea" id="RHEA-COMP:10661"/>
        <dbReference type="ChEBI" id="CHEBI:43474"/>
        <dbReference type="ChEBI" id="CHEBI:46858"/>
        <dbReference type="ChEBI" id="CHEBI:83624"/>
        <dbReference type="ChEBI" id="CHEBI:456216"/>
        <dbReference type="EC" id="2.7.7.89"/>
    </reaction>
</comment>
<comment type="catalytic activity">
    <reaction evidence="1">
        <text>[glutamine synthetase]-L-tyrosine + ATP = [glutamine synthetase]-O(4)-(5'-adenylyl)-L-tyrosine + diphosphate</text>
        <dbReference type="Rhea" id="RHEA:18589"/>
        <dbReference type="Rhea" id="RHEA-COMP:10660"/>
        <dbReference type="Rhea" id="RHEA-COMP:10661"/>
        <dbReference type="ChEBI" id="CHEBI:30616"/>
        <dbReference type="ChEBI" id="CHEBI:33019"/>
        <dbReference type="ChEBI" id="CHEBI:46858"/>
        <dbReference type="ChEBI" id="CHEBI:83624"/>
        <dbReference type="EC" id="2.7.7.42"/>
    </reaction>
</comment>
<comment type="cofactor">
    <cofactor evidence="1">
        <name>Mg(2+)</name>
        <dbReference type="ChEBI" id="CHEBI:18420"/>
    </cofactor>
</comment>
<comment type="similarity">
    <text evidence="1">Belongs to the GlnE family.</text>
</comment>
<proteinExistence type="inferred from homology"/>
<sequence length="929" mass="106323">MSTPIDSSRAASIVASILPYSRYLKRTLASEPGLQQELLDQLPNPFLWEEMLDFLQHPAISLEDEADLHRLLRQLRKRVILRLAARDLAGLADLNEVMTTMTALADTTIRFALEFLHTAMTHPGHFGKPTGEKTGTEQQLLIVAMGKLGGGELNVSSDVDLIFIYPEDGETDGRKSITNHEFFVRLGRKLIASLSDYTVDGYVFRVDMRLRPHGENSPLAISLPMLEDYFITQGREWERHAWIKSRVITGSSVAEATLMELIVRPFVFRKYLDFEAYEAMRSLHAQLRKEVDRRELHDNIKLGPGGIREIEFITQVFQLIRGGRDADLCIRPTLGVLRRLRQKQPLPGQTIEELTEAYCFLRKLEHRLQYLDDQQTQNLPQHPDEQTLIARSMGFTGYGDFLDHLDLHRQNVTRHFEQIFAARRKSPRHDTFARIRPEQSGDHETVEAFSKQLQTLGYLDPGKITARVRQFYDSTFFRQLTHSSQERIFELMPTLMEVIARFPPVDITLERILRLLEKIGQYPAYLALLQEHPQTLPRVAKLASVSQWASDYLGRHPILLDELLTSSGLHILPDWPALKTELTHQLHHVNIPKVQMVEWQMDVLRHFQHAQVFRLLVTDLEGDLLLEKLSDHLTELADLILDNVLQLAWQGLKKKHRELPAFAIIGYGKLGGKELGYASDLDIVFLYRDDHPDAASIYTKLAQNINLWLTSHTSAGILYETDLRLRPNGTSGLLVNSIEAFTQYQYEQAWVWEHQALTRARFVVGDREAGEMFEQMRKNMLCQPRDLVKLKREILMMRSKMLEAHPNPTPLFDIKHDRGGIIDVEFIVQYLVLGYAHRYPQLTGNIGNIALLKLAGELGLTSAGKATAALTAYRELRRTQHQLRLSGTPEPAGTALSRDVSQKFARVANNHLSDARQAVFQLWEDIFGT</sequence>
<keyword id="KW-0067">ATP-binding</keyword>
<keyword id="KW-0460">Magnesium</keyword>
<keyword id="KW-0511">Multifunctional enzyme</keyword>
<keyword id="KW-0547">Nucleotide-binding</keyword>
<keyword id="KW-0548">Nucleotidyltransferase</keyword>
<keyword id="KW-1185">Reference proteome</keyword>
<keyword id="KW-0808">Transferase</keyword>
<evidence type="ECO:0000255" key="1">
    <source>
        <dbReference type="HAMAP-Rule" id="MF_00802"/>
    </source>
</evidence>
<gene>
    <name evidence="1" type="primary">glnE</name>
    <name type="ordered locus">NE1329</name>
</gene>
<accession>Q81ZZ7</accession>